<sequence>MALPLIKPKESEESHLALLSKIHVSKNWKLPPRLPHRAAQRRKRVHRLHEDYETEENDEELQKKKRQNRDAQRAYRERKNNKLQVLEETIESLSKVVKNYETKLNRLQNELQAKESENHALKQKLETLTLKQASVPAQDPILQNLIENFKPMKAIPIKYNTAIKRHQHSTELPSSVKCGFCNDNTTCVCKELETDHRKSDDGVATEQKDMSMPHAECNNKDNPNGLCSNCTNIDKSCIDIRSIIH</sequence>
<dbReference type="EMBL" id="U17015">
    <property type="protein sequence ID" value="AAC49426.1"/>
    <property type="molecule type" value="Genomic_DNA"/>
</dbReference>
<dbReference type="EMBL" id="Z37996">
    <property type="protein sequence ID" value="CAA86089.1"/>
    <property type="molecule type" value="Genomic_DNA"/>
</dbReference>
<dbReference type="EMBL" id="AY558238">
    <property type="protein sequence ID" value="AAS56564.1"/>
    <property type="molecule type" value="Genomic_DNA"/>
</dbReference>
<dbReference type="EMBL" id="BK006942">
    <property type="protein sequence ID" value="DAA08564.1"/>
    <property type="molecule type" value="Genomic_DNA"/>
</dbReference>
<dbReference type="PIR" id="S48363">
    <property type="entry name" value="S48363"/>
</dbReference>
<dbReference type="RefSeq" id="NP_012283.1">
    <property type="nucleotide sequence ID" value="NM_001179540.1"/>
</dbReference>
<dbReference type="SMR" id="P40574"/>
<dbReference type="BioGRID" id="35010">
    <property type="interactions" value="46"/>
</dbReference>
<dbReference type="DIP" id="DIP-2994N"/>
<dbReference type="FunCoup" id="P40574">
    <property type="interactions" value="970"/>
</dbReference>
<dbReference type="IntAct" id="P40574">
    <property type="interactions" value="6"/>
</dbReference>
<dbReference type="MINT" id="P40574"/>
<dbReference type="STRING" id="4932.YIR018W"/>
<dbReference type="iPTMnet" id="P40574"/>
<dbReference type="PaxDb" id="4932-YIR018W"/>
<dbReference type="PeptideAtlas" id="P40574"/>
<dbReference type="EnsemblFungi" id="YIR018W_mRNA">
    <property type="protein sequence ID" value="YIR018W"/>
    <property type="gene ID" value="YIR018W"/>
</dbReference>
<dbReference type="GeneID" id="854835"/>
<dbReference type="KEGG" id="sce:YIR018W"/>
<dbReference type="AGR" id="SGD:S000001457"/>
<dbReference type="SGD" id="S000001457">
    <property type="gene designation" value="YAP5"/>
</dbReference>
<dbReference type="VEuPathDB" id="FungiDB:YIR018W"/>
<dbReference type="eggNOG" id="ENOG502QUE5">
    <property type="taxonomic scope" value="Eukaryota"/>
</dbReference>
<dbReference type="HOGENOM" id="CLU_963771_0_0_1"/>
<dbReference type="InParanoid" id="P40574"/>
<dbReference type="OMA" id="SHERAKP"/>
<dbReference type="OrthoDB" id="2285533at2759"/>
<dbReference type="BioCyc" id="YEAST:G3O-31438-MONOMER"/>
<dbReference type="BioGRID-ORCS" id="854835">
    <property type="hits" value="4 hits in 10 CRISPR screens"/>
</dbReference>
<dbReference type="PRO" id="PR:P40574"/>
<dbReference type="Proteomes" id="UP000002311">
    <property type="component" value="Chromosome IX"/>
</dbReference>
<dbReference type="RNAct" id="P40574">
    <property type="molecule type" value="protein"/>
</dbReference>
<dbReference type="GO" id="GO:0000785">
    <property type="term" value="C:chromatin"/>
    <property type="evidence" value="ECO:0000314"/>
    <property type="project" value="SGD"/>
</dbReference>
<dbReference type="GO" id="GO:0005737">
    <property type="term" value="C:cytoplasm"/>
    <property type="evidence" value="ECO:0007669"/>
    <property type="project" value="UniProtKB-SubCell"/>
</dbReference>
<dbReference type="GO" id="GO:0005634">
    <property type="term" value="C:nucleus"/>
    <property type="evidence" value="ECO:0000314"/>
    <property type="project" value="SGD"/>
</dbReference>
<dbReference type="GO" id="GO:0000981">
    <property type="term" value="F:DNA-binding transcription factor activity, RNA polymerase II-specific"/>
    <property type="evidence" value="ECO:0000314"/>
    <property type="project" value="SGD"/>
</dbReference>
<dbReference type="GO" id="GO:0000976">
    <property type="term" value="F:transcription cis-regulatory region binding"/>
    <property type="evidence" value="ECO:0007669"/>
    <property type="project" value="InterPro"/>
</dbReference>
<dbReference type="GO" id="GO:0071281">
    <property type="term" value="P:cellular response to iron ion"/>
    <property type="evidence" value="ECO:0000315"/>
    <property type="project" value="SGD"/>
</dbReference>
<dbReference type="GO" id="GO:0000122">
    <property type="term" value="P:negative regulation of transcription by RNA polymerase II"/>
    <property type="evidence" value="ECO:0000315"/>
    <property type="project" value="SGD"/>
</dbReference>
<dbReference type="GO" id="GO:0045944">
    <property type="term" value="P:positive regulation of transcription by RNA polymerase II"/>
    <property type="evidence" value="ECO:0000314"/>
    <property type="project" value="SGD"/>
</dbReference>
<dbReference type="CDD" id="cd14688">
    <property type="entry name" value="bZIP_YAP"/>
    <property type="match status" value="1"/>
</dbReference>
<dbReference type="Gene3D" id="1.20.5.170">
    <property type="match status" value="1"/>
</dbReference>
<dbReference type="InterPro" id="IPR050936">
    <property type="entry name" value="AP-1-like"/>
</dbReference>
<dbReference type="InterPro" id="IPR004827">
    <property type="entry name" value="bZIP"/>
</dbReference>
<dbReference type="InterPro" id="IPR046347">
    <property type="entry name" value="bZIP_sf"/>
</dbReference>
<dbReference type="PANTHER" id="PTHR40621:SF6">
    <property type="entry name" value="AP-1-LIKE TRANSCRIPTION FACTOR YAP1-RELATED"/>
    <property type="match status" value="1"/>
</dbReference>
<dbReference type="PANTHER" id="PTHR40621">
    <property type="entry name" value="TRANSCRIPTION FACTOR KAPC-RELATED"/>
    <property type="match status" value="1"/>
</dbReference>
<dbReference type="SMART" id="SM00338">
    <property type="entry name" value="BRLZ"/>
    <property type="match status" value="1"/>
</dbReference>
<dbReference type="SUPFAM" id="SSF57959">
    <property type="entry name" value="Leucine zipper domain"/>
    <property type="match status" value="1"/>
</dbReference>
<dbReference type="PROSITE" id="PS50217">
    <property type="entry name" value="BZIP"/>
    <property type="match status" value="1"/>
</dbReference>
<dbReference type="PROSITE" id="PS00036">
    <property type="entry name" value="BZIP_BASIC"/>
    <property type="match status" value="1"/>
</dbReference>
<keyword id="KW-0010">Activator</keyword>
<keyword id="KW-0963">Cytoplasm</keyword>
<keyword id="KW-0238">DNA-binding</keyword>
<keyword id="KW-0539">Nucleus</keyword>
<keyword id="KW-1185">Reference proteome</keyword>
<keyword id="KW-0804">Transcription</keyword>
<keyword id="KW-0805">Transcription regulation</keyword>
<protein>
    <recommendedName>
        <fullName>AP-1-like transcription factor YAP5</fullName>
    </recommendedName>
</protein>
<feature type="chain" id="PRO_0000076525" description="AP-1-like transcription factor YAP5">
    <location>
        <begin position="1"/>
        <end position="245"/>
    </location>
</feature>
<feature type="domain" description="bZIP" evidence="2">
    <location>
        <begin position="58"/>
        <end position="121"/>
    </location>
</feature>
<feature type="region of interest" description="Disordered" evidence="3">
    <location>
        <begin position="34"/>
        <end position="77"/>
    </location>
</feature>
<feature type="region of interest" description="Basic motif" evidence="2">
    <location>
        <begin position="63"/>
        <end position="82"/>
    </location>
</feature>
<feature type="region of interest" description="Leucine-zipper" evidence="2">
    <location>
        <begin position="86"/>
        <end position="114"/>
    </location>
</feature>
<feature type="compositionally biased region" description="Basic residues" evidence="3">
    <location>
        <begin position="34"/>
        <end position="47"/>
    </location>
</feature>
<feature type="compositionally biased region" description="Basic and acidic residues" evidence="3">
    <location>
        <begin position="68"/>
        <end position="77"/>
    </location>
</feature>
<feature type="sequence conflict" description="In Ref. 1; AAC49426." evidence="9" ref="1">
    <original>P</original>
    <variation>S</variation>
    <location>
        <position position="173"/>
    </location>
</feature>
<accession>P40574</accession>
<accession>D6VVU8</accession>
<name>YAP5_YEAST</name>
<reference key="1">
    <citation type="journal article" date="1996" name="EMBO J.">
        <title>A heteromeric complex containing the centromere binding factor 1 and two basic leucine zipper factors, Met4 and Met28, mediates the transcription activation of yeast sulfur metabolism.</title>
        <authorList>
            <person name="Kuras L."/>
            <person name="Cherest H."/>
            <person name="Surdin-Kerjan Y."/>
            <person name="Thomas D."/>
        </authorList>
    </citation>
    <scope>NUCLEOTIDE SEQUENCE [GENOMIC DNA]</scope>
    <source>
        <strain>ATCC 28383 / FL100 / VTT C-80102</strain>
    </source>
</reference>
<reference key="2">
    <citation type="journal article" date="1997" name="Nature">
        <title>The nucleotide sequence of Saccharomyces cerevisiae chromosome IX.</title>
        <authorList>
            <person name="Churcher C.M."/>
            <person name="Bowman S."/>
            <person name="Badcock K."/>
            <person name="Bankier A.T."/>
            <person name="Brown D."/>
            <person name="Chillingworth T."/>
            <person name="Connor R."/>
            <person name="Devlin K."/>
            <person name="Gentles S."/>
            <person name="Hamlin N."/>
            <person name="Harris D.E."/>
            <person name="Horsnell T."/>
            <person name="Hunt S."/>
            <person name="Jagels K."/>
            <person name="Jones M."/>
            <person name="Lye G."/>
            <person name="Moule S."/>
            <person name="Odell C."/>
            <person name="Pearson D."/>
            <person name="Rajandream M.A."/>
            <person name="Rice P."/>
            <person name="Rowley N."/>
            <person name="Skelton J."/>
            <person name="Smith V."/>
            <person name="Walsh S.V."/>
            <person name="Whitehead S."/>
            <person name="Barrell B.G."/>
        </authorList>
    </citation>
    <scope>NUCLEOTIDE SEQUENCE [LARGE SCALE GENOMIC DNA]</scope>
    <source>
        <strain>ATCC 204508 / S288c</strain>
    </source>
</reference>
<reference key="3">
    <citation type="journal article" date="2014" name="G3 (Bethesda)">
        <title>The reference genome sequence of Saccharomyces cerevisiae: Then and now.</title>
        <authorList>
            <person name="Engel S.R."/>
            <person name="Dietrich F.S."/>
            <person name="Fisk D.G."/>
            <person name="Binkley G."/>
            <person name="Balakrishnan R."/>
            <person name="Costanzo M.C."/>
            <person name="Dwight S.S."/>
            <person name="Hitz B.C."/>
            <person name="Karra K."/>
            <person name="Nash R.S."/>
            <person name="Weng S."/>
            <person name="Wong E.D."/>
            <person name="Lloyd P."/>
            <person name="Skrzypek M.S."/>
            <person name="Miyasato S.R."/>
            <person name="Simison M."/>
            <person name="Cherry J.M."/>
        </authorList>
    </citation>
    <scope>GENOME REANNOTATION</scope>
    <source>
        <strain>ATCC 204508 / S288c</strain>
    </source>
</reference>
<reference key="4">
    <citation type="journal article" date="2007" name="Genome Res.">
        <title>Approaching a complete repository of sequence-verified protein-encoding clones for Saccharomyces cerevisiae.</title>
        <authorList>
            <person name="Hu Y."/>
            <person name="Rolfs A."/>
            <person name="Bhullar B."/>
            <person name="Murthy T.V.S."/>
            <person name="Zhu C."/>
            <person name="Berger M.F."/>
            <person name="Camargo A.A."/>
            <person name="Kelley F."/>
            <person name="McCarron S."/>
            <person name="Jepson D."/>
            <person name="Richardson A."/>
            <person name="Raphael J."/>
            <person name="Moreira D."/>
            <person name="Taycher E."/>
            <person name="Zuo D."/>
            <person name="Mohr S."/>
            <person name="Kane M.F."/>
            <person name="Williamson J."/>
            <person name="Simpson A.J.G."/>
            <person name="Bulyk M.L."/>
            <person name="Harlow E."/>
            <person name="Marsischky G."/>
            <person name="Kolodner R.D."/>
            <person name="LaBaer J."/>
        </authorList>
    </citation>
    <scope>NUCLEOTIDE SEQUENCE [GENOMIC DNA]</scope>
    <source>
        <strain>ATCC 204508 / S288c</strain>
    </source>
</reference>
<reference key="5">
    <citation type="journal article" date="1997" name="Mol. Cell. Biol.">
        <title>Yap, a novel family of eight bZIP proteins in Saccharomyces cerevisiae with distinct biological functions.</title>
        <authorList>
            <person name="Fernandes L."/>
            <person name="Rodrigues-Pousada C."/>
            <person name="Struhl K."/>
        </authorList>
    </citation>
    <scope>FUNCTION</scope>
    <scope>ISOLATION OF YAP FAMILY PROTEINS</scope>
</reference>
<reference key="6">
    <citation type="journal article" date="2002" name="Genes Dev.">
        <title>Complex transcriptional circuitry at the G1/S transition in Saccharomyces cerevisiae.</title>
        <authorList>
            <person name="Horak C.E."/>
            <person name="Luscombe N.M."/>
            <person name="Qian J."/>
            <person name="Bertone P."/>
            <person name="Piccirrillo S."/>
            <person name="Gerstein M."/>
            <person name="Snyder M."/>
        </authorList>
    </citation>
    <scope>FUNCTION</scope>
    <scope>CELL CYCLE ACTIVATION</scope>
</reference>
<reference key="7">
    <citation type="journal article" date="2003" name="Nat. Biotechnol.">
        <title>Computational discovery of gene modules and regulatory networks.</title>
        <authorList>
            <person name="Bar-Joseph Z."/>
            <person name="Gerber G.K."/>
            <person name="Lee T.I."/>
            <person name="Rinaldi N.J."/>
            <person name="Yoo J.Y."/>
            <person name="Robert F."/>
            <person name="Gordon D.B."/>
            <person name="Fraenkel E."/>
            <person name="Jaakkola T.S."/>
            <person name="Young R.A."/>
            <person name="Gifford D.K."/>
        </authorList>
    </citation>
    <scope>FUNCTION</scope>
    <scope>REGULATORY TRANSCRIPTION MODULES</scope>
</reference>
<reference key="8">
    <citation type="journal article" date="2003" name="Nature">
        <title>Global analysis of protein localization in budding yeast.</title>
        <authorList>
            <person name="Huh W.-K."/>
            <person name="Falvo J.V."/>
            <person name="Gerke L.C."/>
            <person name="Carroll A.S."/>
            <person name="Howson R.W."/>
            <person name="Weissman J.S."/>
            <person name="O'Shea E.K."/>
        </authorList>
    </citation>
    <scope>SUBCELLULAR LOCATION [LARGE SCALE ANALYSIS]</scope>
</reference>
<reference key="9">
    <citation type="journal article" date="2003" name="Nature">
        <title>Global analysis of protein expression in yeast.</title>
        <authorList>
            <person name="Ghaemmaghami S."/>
            <person name="Huh W.-K."/>
            <person name="Bower K."/>
            <person name="Howson R.W."/>
            <person name="Belle A."/>
            <person name="Dephoure N."/>
            <person name="O'Shea E.K."/>
            <person name="Weissman J.S."/>
        </authorList>
    </citation>
    <scope>LEVEL OF PROTEIN EXPRESSION [LARGE SCALE ANALYSIS]</scope>
</reference>
<gene>
    <name type="primary">YAP5</name>
    <name type="ordered locus">YIR018W</name>
</gene>
<organism>
    <name type="scientific">Saccharomyces cerevisiae (strain ATCC 204508 / S288c)</name>
    <name type="common">Baker's yeast</name>
    <dbReference type="NCBI Taxonomy" id="559292"/>
    <lineage>
        <taxon>Eukaryota</taxon>
        <taxon>Fungi</taxon>
        <taxon>Dikarya</taxon>
        <taxon>Ascomycota</taxon>
        <taxon>Saccharomycotina</taxon>
        <taxon>Saccharomycetes</taxon>
        <taxon>Saccharomycetales</taxon>
        <taxon>Saccharomycetaceae</taxon>
        <taxon>Saccharomyces</taxon>
    </lineage>
</organism>
<proteinExistence type="evidence at protein level"/>
<comment type="function">
    <text evidence="4 5 8">Transcription activator involved in the regulation of genes expressed in response to environmental changes and metabolic requirements. According to genome-wide promoter binding and gene expression studies it is a coregulator for the expression of ribosomal genes, while its own expression is induced by the cell cycle specific activator SBF (SWI4-SWI6).</text>
</comment>
<comment type="subunit">
    <text evidence="1">Homodimer.</text>
</comment>
<comment type="subcellular location">
    <subcellularLocation>
        <location evidence="6">Cytoplasm</location>
    </subcellularLocation>
    <subcellularLocation>
        <location evidence="2 6">Nucleus</location>
    </subcellularLocation>
</comment>
<comment type="miscellaneous">
    <text>One of 8 closely related fungi-specific YAP proteins (YAP1 to YAP8), which all seem to be transcription activators of the environmental stress response and metabolism control pathways and to have similar but not identical DNA binding specificities.</text>
</comment>
<comment type="miscellaneous">
    <text evidence="7">Present with 238 molecules/cell in log phase SD medium.</text>
</comment>
<comment type="similarity">
    <text evidence="9">Belongs to the bZIP family. YAP subfamily.</text>
</comment>
<evidence type="ECO:0000250" key="1"/>
<evidence type="ECO:0000255" key="2">
    <source>
        <dbReference type="PROSITE-ProRule" id="PRU00978"/>
    </source>
</evidence>
<evidence type="ECO:0000256" key="3">
    <source>
        <dbReference type="SAM" id="MobiDB-lite"/>
    </source>
</evidence>
<evidence type="ECO:0000269" key="4">
    <source>
    </source>
</evidence>
<evidence type="ECO:0000269" key="5">
    <source>
    </source>
</evidence>
<evidence type="ECO:0000269" key="6">
    <source>
    </source>
</evidence>
<evidence type="ECO:0000269" key="7">
    <source>
    </source>
</evidence>
<evidence type="ECO:0000269" key="8">
    <source>
    </source>
</evidence>
<evidence type="ECO:0000305" key="9"/>